<organism>
    <name type="scientific">Bacillus cereus (strain B4264)</name>
    <dbReference type="NCBI Taxonomy" id="405532"/>
    <lineage>
        <taxon>Bacteria</taxon>
        <taxon>Bacillati</taxon>
        <taxon>Bacillota</taxon>
        <taxon>Bacilli</taxon>
        <taxon>Bacillales</taxon>
        <taxon>Bacillaceae</taxon>
        <taxon>Bacillus</taxon>
        <taxon>Bacillus cereus group</taxon>
    </lineage>
</organism>
<keyword id="KW-0520">NAD</keyword>
<keyword id="KW-0560">Oxidoreductase</keyword>
<keyword id="KW-0597">Phosphoprotein</keyword>
<keyword id="KW-0816">Tricarboxylic acid cycle</keyword>
<feature type="chain" id="PRO_1000126123" description="Malate dehydrogenase">
    <location>
        <begin position="1"/>
        <end position="312"/>
    </location>
</feature>
<feature type="active site" description="Proton acceptor" evidence="1">
    <location>
        <position position="180"/>
    </location>
</feature>
<feature type="binding site" evidence="1">
    <location>
        <begin position="12"/>
        <end position="17"/>
    </location>
    <ligand>
        <name>NAD(+)</name>
        <dbReference type="ChEBI" id="CHEBI:57540"/>
    </ligand>
</feature>
<feature type="binding site" evidence="1">
    <location>
        <position position="36"/>
    </location>
    <ligand>
        <name>NAD(+)</name>
        <dbReference type="ChEBI" id="CHEBI:57540"/>
    </ligand>
</feature>
<feature type="binding site" evidence="1">
    <location>
        <position position="87"/>
    </location>
    <ligand>
        <name>substrate</name>
    </ligand>
</feature>
<feature type="binding site" evidence="1">
    <location>
        <position position="93"/>
    </location>
    <ligand>
        <name>substrate</name>
    </ligand>
</feature>
<feature type="binding site" evidence="1">
    <location>
        <position position="100"/>
    </location>
    <ligand>
        <name>NAD(+)</name>
        <dbReference type="ChEBI" id="CHEBI:57540"/>
    </ligand>
</feature>
<feature type="binding site" evidence="1">
    <location>
        <begin position="123"/>
        <end position="125"/>
    </location>
    <ligand>
        <name>NAD(+)</name>
        <dbReference type="ChEBI" id="CHEBI:57540"/>
    </ligand>
</feature>
<feature type="binding site" evidence="1">
    <location>
        <position position="125"/>
    </location>
    <ligand>
        <name>substrate</name>
    </ligand>
</feature>
<feature type="binding site" evidence="1">
    <location>
        <position position="156"/>
    </location>
    <ligand>
        <name>substrate</name>
    </ligand>
</feature>
<feature type="modified residue" description="Phosphoserine" evidence="1">
    <location>
        <position position="149"/>
    </location>
</feature>
<comment type="function">
    <text evidence="1">Catalyzes the reversible oxidation of malate to oxaloacetate.</text>
</comment>
<comment type="catalytic activity">
    <reaction evidence="1">
        <text>(S)-malate + NAD(+) = oxaloacetate + NADH + H(+)</text>
        <dbReference type="Rhea" id="RHEA:21432"/>
        <dbReference type="ChEBI" id="CHEBI:15378"/>
        <dbReference type="ChEBI" id="CHEBI:15589"/>
        <dbReference type="ChEBI" id="CHEBI:16452"/>
        <dbReference type="ChEBI" id="CHEBI:57540"/>
        <dbReference type="ChEBI" id="CHEBI:57945"/>
        <dbReference type="EC" id="1.1.1.37"/>
    </reaction>
</comment>
<comment type="similarity">
    <text evidence="1">Belongs to the LDH/MDH superfamily. MDH type 3 family.</text>
</comment>
<gene>
    <name evidence="1" type="primary">mdh</name>
    <name type="ordered locus">BCB4264_A4702</name>
</gene>
<sequence>MTIKRKKVSVIGAGFTGATTAFLLAQKELADVVLVDIPQLENPTKGKALDMLEASPVQGFDANIIGTSDYADTADSDVVVITAGIARKPGMSRDDLVATNSKIMKSITRDIAKHSPNAIIVVLTNPVDAMTYSVFKEAGFPKERVIGQSGVLDTARFRTFIAQELNLSVKDITGFVLGGHGDDMVPLVRYSYAGGIPLETLIPKERLEAIVERTRKGGGEIVGLLGNGSAYYAPAASLVEMTEAILKDQRRVLPAIAYLEGEYGYSDLYLGVPVILGGNGIEKIIELELLADEKEALDRSVESVRNVMKVLV</sequence>
<evidence type="ECO:0000255" key="1">
    <source>
        <dbReference type="HAMAP-Rule" id="MF_00487"/>
    </source>
</evidence>
<dbReference type="EC" id="1.1.1.37" evidence="1"/>
<dbReference type="EMBL" id="CP001176">
    <property type="protein sequence ID" value="ACK63472.1"/>
    <property type="molecule type" value="Genomic_DNA"/>
</dbReference>
<dbReference type="RefSeq" id="WP_000153232.1">
    <property type="nucleotide sequence ID" value="NZ_VEHB01000005.1"/>
</dbReference>
<dbReference type="SMR" id="B7HFA6"/>
<dbReference type="GeneID" id="93006518"/>
<dbReference type="KEGG" id="bcb:BCB4264_A4702"/>
<dbReference type="HOGENOM" id="CLU_045401_2_1_9"/>
<dbReference type="Proteomes" id="UP000007096">
    <property type="component" value="Chromosome"/>
</dbReference>
<dbReference type="GO" id="GO:0004459">
    <property type="term" value="F:L-lactate dehydrogenase activity"/>
    <property type="evidence" value="ECO:0007669"/>
    <property type="project" value="TreeGrafter"/>
</dbReference>
<dbReference type="GO" id="GO:0030060">
    <property type="term" value="F:L-malate dehydrogenase (NAD+) activity"/>
    <property type="evidence" value="ECO:0007669"/>
    <property type="project" value="UniProtKB-UniRule"/>
</dbReference>
<dbReference type="GO" id="GO:0006089">
    <property type="term" value="P:lactate metabolic process"/>
    <property type="evidence" value="ECO:0007669"/>
    <property type="project" value="TreeGrafter"/>
</dbReference>
<dbReference type="GO" id="GO:0006099">
    <property type="term" value="P:tricarboxylic acid cycle"/>
    <property type="evidence" value="ECO:0007669"/>
    <property type="project" value="UniProtKB-UniRule"/>
</dbReference>
<dbReference type="CDD" id="cd01339">
    <property type="entry name" value="LDH-like_MDH"/>
    <property type="match status" value="1"/>
</dbReference>
<dbReference type="FunFam" id="3.40.50.720:FF:000018">
    <property type="entry name" value="Malate dehydrogenase"/>
    <property type="match status" value="1"/>
</dbReference>
<dbReference type="FunFam" id="3.90.110.10:FF:000004">
    <property type="entry name" value="Malate dehydrogenase"/>
    <property type="match status" value="1"/>
</dbReference>
<dbReference type="Gene3D" id="3.90.110.10">
    <property type="entry name" value="Lactate dehydrogenase/glycoside hydrolase, family 4, C-terminal"/>
    <property type="match status" value="1"/>
</dbReference>
<dbReference type="Gene3D" id="3.40.50.720">
    <property type="entry name" value="NAD(P)-binding Rossmann-like Domain"/>
    <property type="match status" value="1"/>
</dbReference>
<dbReference type="HAMAP" id="MF_00487">
    <property type="entry name" value="Malate_dehydrog_3"/>
    <property type="match status" value="1"/>
</dbReference>
<dbReference type="InterPro" id="IPR001557">
    <property type="entry name" value="L-lactate/malate_DH"/>
</dbReference>
<dbReference type="InterPro" id="IPR022383">
    <property type="entry name" value="Lactate/malate_DH_C"/>
</dbReference>
<dbReference type="InterPro" id="IPR001236">
    <property type="entry name" value="Lactate/malate_DH_N"/>
</dbReference>
<dbReference type="InterPro" id="IPR015955">
    <property type="entry name" value="Lactate_DH/Glyco_Ohase_4_C"/>
</dbReference>
<dbReference type="InterPro" id="IPR011275">
    <property type="entry name" value="Malate_DH_type3"/>
</dbReference>
<dbReference type="InterPro" id="IPR036291">
    <property type="entry name" value="NAD(P)-bd_dom_sf"/>
</dbReference>
<dbReference type="NCBIfam" id="TIGR01763">
    <property type="entry name" value="MalateDH_bact"/>
    <property type="match status" value="1"/>
</dbReference>
<dbReference type="NCBIfam" id="NF004863">
    <property type="entry name" value="PRK06223.1"/>
    <property type="match status" value="1"/>
</dbReference>
<dbReference type="PANTHER" id="PTHR43128">
    <property type="entry name" value="L-2-HYDROXYCARBOXYLATE DEHYDROGENASE (NAD(P)(+))"/>
    <property type="match status" value="1"/>
</dbReference>
<dbReference type="PANTHER" id="PTHR43128:SF16">
    <property type="entry name" value="L-LACTATE DEHYDROGENASE"/>
    <property type="match status" value="1"/>
</dbReference>
<dbReference type="Pfam" id="PF02866">
    <property type="entry name" value="Ldh_1_C"/>
    <property type="match status" value="1"/>
</dbReference>
<dbReference type="Pfam" id="PF00056">
    <property type="entry name" value="Ldh_1_N"/>
    <property type="match status" value="1"/>
</dbReference>
<dbReference type="PIRSF" id="PIRSF000102">
    <property type="entry name" value="Lac_mal_DH"/>
    <property type="match status" value="1"/>
</dbReference>
<dbReference type="PRINTS" id="PR00086">
    <property type="entry name" value="LLDHDRGNASE"/>
</dbReference>
<dbReference type="SUPFAM" id="SSF56327">
    <property type="entry name" value="LDH C-terminal domain-like"/>
    <property type="match status" value="1"/>
</dbReference>
<dbReference type="SUPFAM" id="SSF51735">
    <property type="entry name" value="NAD(P)-binding Rossmann-fold domains"/>
    <property type="match status" value="1"/>
</dbReference>
<proteinExistence type="inferred from homology"/>
<reference key="1">
    <citation type="submission" date="2008-10" db="EMBL/GenBank/DDBJ databases">
        <title>Genome sequence of Bacillus cereus B4264.</title>
        <authorList>
            <person name="Dodson R.J."/>
            <person name="Durkin A.S."/>
            <person name="Rosovitz M.J."/>
            <person name="Rasko D.A."/>
            <person name="Hoffmaster A."/>
            <person name="Ravel J."/>
            <person name="Sutton G."/>
        </authorList>
    </citation>
    <scope>NUCLEOTIDE SEQUENCE [LARGE SCALE GENOMIC DNA]</scope>
    <source>
        <strain>B4264</strain>
    </source>
</reference>
<accession>B7HFA6</accession>
<protein>
    <recommendedName>
        <fullName evidence="1">Malate dehydrogenase</fullName>
        <ecNumber evidence="1">1.1.1.37</ecNumber>
    </recommendedName>
</protein>
<name>MDH_BACC4</name>